<dbReference type="EMBL" id="CP001014">
    <property type="protein sequence ID" value="ACB40601.1"/>
    <property type="molecule type" value="Genomic_DNA"/>
</dbReference>
<dbReference type="RefSeq" id="WP_012351020.1">
    <property type="nucleotide sequence ID" value="NC_010525.1"/>
</dbReference>
<dbReference type="SMR" id="B1YAF2"/>
<dbReference type="STRING" id="444157.Tneu_1679"/>
<dbReference type="GeneID" id="6165288"/>
<dbReference type="KEGG" id="tne:Tneu_1679"/>
<dbReference type="eggNOG" id="arCOG04179">
    <property type="taxonomic scope" value="Archaea"/>
</dbReference>
<dbReference type="HOGENOM" id="CLU_122978_3_0_2"/>
<dbReference type="OrthoDB" id="7912at2157"/>
<dbReference type="Proteomes" id="UP000001694">
    <property type="component" value="Chromosome"/>
</dbReference>
<dbReference type="GO" id="GO:0005829">
    <property type="term" value="C:cytosol"/>
    <property type="evidence" value="ECO:0007669"/>
    <property type="project" value="TreeGrafter"/>
</dbReference>
<dbReference type="GO" id="GO:0003677">
    <property type="term" value="F:DNA binding"/>
    <property type="evidence" value="ECO:0007669"/>
    <property type="project" value="UniProtKB-UniRule"/>
</dbReference>
<dbReference type="Gene3D" id="1.10.8.140">
    <property type="entry name" value="PDCD5-like"/>
    <property type="match status" value="1"/>
</dbReference>
<dbReference type="HAMAP" id="MF_00026">
    <property type="entry name" value="dsDNA_bind"/>
    <property type="match status" value="1"/>
</dbReference>
<dbReference type="InterPro" id="IPR022889">
    <property type="entry name" value="DNA_bind_arc"/>
</dbReference>
<dbReference type="InterPro" id="IPR002836">
    <property type="entry name" value="PDCD5-like"/>
</dbReference>
<dbReference type="InterPro" id="IPR036883">
    <property type="entry name" value="PDCD5-like_sf"/>
</dbReference>
<dbReference type="NCBIfam" id="NF003268">
    <property type="entry name" value="PRK04239.1"/>
    <property type="match status" value="1"/>
</dbReference>
<dbReference type="PANTHER" id="PTHR10840">
    <property type="entry name" value="PROGRAMMED CELL DEATH PROTEIN 5"/>
    <property type="match status" value="1"/>
</dbReference>
<dbReference type="PANTHER" id="PTHR10840:SF0">
    <property type="entry name" value="PROGRAMMED CELL DEATH PROTEIN 5"/>
    <property type="match status" value="1"/>
</dbReference>
<dbReference type="Pfam" id="PF01984">
    <property type="entry name" value="dsDNA_bind"/>
    <property type="match status" value="1"/>
</dbReference>
<dbReference type="PIRSF" id="PIRSF015730">
    <property type="entry name" value="TFAR19"/>
    <property type="match status" value="1"/>
</dbReference>
<dbReference type="SUPFAM" id="SSF46950">
    <property type="entry name" value="Double-stranded DNA-binding domain"/>
    <property type="match status" value="1"/>
</dbReference>
<feature type="chain" id="PRO_1000090214" description="DNA-binding protein Tneu_1679">
    <location>
        <begin position="1"/>
        <end position="110"/>
    </location>
</feature>
<accession>B1YAF2</accession>
<comment type="similarity">
    <text evidence="1">Belongs to the PDCD5 family.</text>
</comment>
<proteinExistence type="inferred from homology"/>
<organism>
    <name type="scientific">Pyrobaculum neutrophilum (strain DSM 2338 / JCM 9278 / NBRC 100436 / V24Sta)</name>
    <name type="common">Thermoproteus neutrophilus</name>
    <dbReference type="NCBI Taxonomy" id="444157"/>
    <lineage>
        <taxon>Archaea</taxon>
        <taxon>Thermoproteota</taxon>
        <taxon>Thermoprotei</taxon>
        <taxon>Thermoproteales</taxon>
        <taxon>Thermoproteaceae</taxon>
        <taxon>Pyrobaculum</taxon>
    </lineage>
</organism>
<reference key="1">
    <citation type="submission" date="2008-03" db="EMBL/GenBank/DDBJ databases">
        <title>Complete sequence of Thermoproteus neutrophilus V24Sta.</title>
        <authorList>
            <consortium name="US DOE Joint Genome Institute"/>
            <person name="Copeland A."/>
            <person name="Lucas S."/>
            <person name="Lapidus A."/>
            <person name="Glavina del Rio T."/>
            <person name="Dalin E."/>
            <person name="Tice H."/>
            <person name="Bruce D."/>
            <person name="Goodwin L."/>
            <person name="Pitluck S."/>
            <person name="Sims D."/>
            <person name="Brettin T."/>
            <person name="Detter J.C."/>
            <person name="Han C."/>
            <person name="Kuske C.R."/>
            <person name="Schmutz J."/>
            <person name="Larimer F."/>
            <person name="Land M."/>
            <person name="Hauser L."/>
            <person name="Kyrpides N."/>
            <person name="Mikhailova N."/>
            <person name="Biddle J.F."/>
            <person name="Zhang Z."/>
            <person name="Fitz-Gibbon S.T."/>
            <person name="Lowe T.M."/>
            <person name="Saltikov C."/>
            <person name="House C.H."/>
            <person name="Richardson P."/>
        </authorList>
    </citation>
    <scope>NUCLEOTIDE SEQUENCE [LARGE SCALE GENOMIC DNA]</scope>
    <source>
        <strain>DSM 2338 / JCM 9278 / NBRC 100436 / V24Sta</strain>
    </source>
</reference>
<protein>
    <recommendedName>
        <fullName evidence="1">DNA-binding protein Tneu_1679</fullName>
    </recommendedName>
</protein>
<evidence type="ECO:0000255" key="1">
    <source>
        <dbReference type="HAMAP-Rule" id="MF_00026"/>
    </source>
</evidence>
<name>Y1679_PYRNV</name>
<sequence length="110" mass="12713">MAEGGYEDRELEELRRKKLEELQKKAELERQAQIAAAQRRIALKKILTPAALARLDNIRVVRPELAEALEQQLIALASSGRVRVPIDEDTLKEILEAVYSQSKREYRFRL</sequence>
<gene>
    <name type="ordered locus">Tneu_1679</name>
</gene>
<keyword id="KW-0238">DNA-binding</keyword>